<keyword id="KW-0028">Amino-acid biosynthesis</keyword>
<keyword id="KW-0057">Aromatic amino acid biosynthesis</keyword>
<keyword id="KW-0456">Lyase</keyword>
<keyword id="KW-0663">Pyridoxal phosphate</keyword>
<keyword id="KW-1185">Reference proteome</keyword>
<keyword id="KW-0822">Tryptophan biosynthesis</keyword>
<proteinExistence type="inferred from homology"/>
<organism>
    <name type="scientific">Vesicomyosocius okutanii subsp. Calyptogena okutanii (strain HA)</name>
    <dbReference type="NCBI Taxonomy" id="412965"/>
    <lineage>
        <taxon>Bacteria</taxon>
        <taxon>Pseudomonadati</taxon>
        <taxon>Pseudomonadota</taxon>
        <taxon>Gammaproteobacteria</taxon>
        <taxon>Candidatus Pseudothioglobaceae</taxon>
        <taxon>Candidatus Vesicomyosocius</taxon>
    </lineage>
</organism>
<name>TRPB_VESOH</name>
<gene>
    <name evidence="1" type="primary">trpB</name>
    <name type="ordered locus">COSY_0933</name>
</gene>
<protein>
    <recommendedName>
        <fullName evidence="1">Tryptophan synthase beta chain</fullName>
        <ecNumber evidence="1">4.2.1.20</ecNumber>
    </recommendedName>
</protein>
<feature type="chain" id="PRO_1000076412" description="Tryptophan synthase beta chain">
    <location>
        <begin position="1"/>
        <end position="401"/>
    </location>
</feature>
<feature type="modified residue" description="N6-(pyridoxal phosphate)lysine" evidence="1">
    <location>
        <position position="92"/>
    </location>
</feature>
<sequence>MSNYNLPDDNGHFDKYGGIFIAETLMTAVFELKDAYARFKNDSKFICEFEQDLKHYAGRETPLYYAKNLSKKLRGAQIYLKREDLNHTGSHKINNTIGQALLAKRMGKTRIIAETGAGQHGVATATVAARLGLECVVYMGEVDVARQSLNVFRMKLLGAKVIPVTSGSKTLKDSLNEAMRDWVKNIDDTFYIIGTIAGPHPYPMMVRDFQSIIGKEAKAQFHDQVGGLPDALVACVGGGSNAIGLFYAFIDNVSVEIYGVEAAGHGLEKGPSAHAAPLCAGNVGVLHGNRTYLMGDENGQIIEGHSIAAGLDYPGVGPEHAYLKDSGRAQYMAITDKEALEAFHILTKIEGILPALESSHAVAYGIKLAKKLGKNKSIIINLSGRGDKDIHTIAQIEGIEC</sequence>
<reference key="1">
    <citation type="journal article" date="2007" name="Curr. Biol.">
        <title>Reduced genome of the thioautotrophic intracellular symbiont in a deep-sea clam, Calyptogena okutanii.</title>
        <authorList>
            <person name="Kuwahara H."/>
            <person name="Yoshida T."/>
            <person name="Takaki Y."/>
            <person name="Shimamura S."/>
            <person name="Nishi S."/>
            <person name="Harada M."/>
            <person name="Matsuyama K."/>
            <person name="Takishita K."/>
            <person name="Kawato M."/>
            <person name="Uematsu K."/>
            <person name="Fujiwara Y."/>
            <person name="Sato T."/>
            <person name="Kato C."/>
            <person name="Kitagawa M."/>
            <person name="Kato I."/>
            <person name="Maruyama T."/>
        </authorList>
    </citation>
    <scope>NUCLEOTIDE SEQUENCE [LARGE SCALE GENOMIC DNA]</scope>
    <source>
        <strain>HA</strain>
    </source>
</reference>
<accession>A5CVH4</accession>
<evidence type="ECO:0000255" key="1">
    <source>
        <dbReference type="HAMAP-Rule" id="MF_00133"/>
    </source>
</evidence>
<dbReference type="EC" id="4.2.1.20" evidence="1"/>
<dbReference type="EMBL" id="AP009247">
    <property type="protein sequence ID" value="BAF62032.1"/>
    <property type="molecule type" value="Genomic_DNA"/>
</dbReference>
<dbReference type="RefSeq" id="WP_011930301.1">
    <property type="nucleotide sequence ID" value="NC_009465.1"/>
</dbReference>
<dbReference type="SMR" id="A5CVH4"/>
<dbReference type="STRING" id="412965.COSY_0933"/>
<dbReference type="KEGG" id="vok:COSY_0933"/>
<dbReference type="eggNOG" id="COG0133">
    <property type="taxonomic scope" value="Bacteria"/>
</dbReference>
<dbReference type="HOGENOM" id="CLU_016734_3_1_6"/>
<dbReference type="OrthoDB" id="9766131at2"/>
<dbReference type="UniPathway" id="UPA00035">
    <property type="reaction ID" value="UER00044"/>
</dbReference>
<dbReference type="Proteomes" id="UP000000247">
    <property type="component" value="Chromosome"/>
</dbReference>
<dbReference type="GO" id="GO:0005737">
    <property type="term" value="C:cytoplasm"/>
    <property type="evidence" value="ECO:0007669"/>
    <property type="project" value="TreeGrafter"/>
</dbReference>
<dbReference type="GO" id="GO:0004834">
    <property type="term" value="F:tryptophan synthase activity"/>
    <property type="evidence" value="ECO:0007669"/>
    <property type="project" value="UniProtKB-UniRule"/>
</dbReference>
<dbReference type="CDD" id="cd06446">
    <property type="entry name" value="Trp-synth_B"/>
    <property type="match status" value="1"/>
</dbReference>
<dbReference type="FunFam" id="3.40.50.1100:FF:000001">
    <property type="entry name" value="Tryptophan synthase beta chain"/>
    <property type="match status" value="1"/>
</dbReference>
<dbReference type="FunFam" id="3.40.50.1100:FF:000004">
    <property type="entry name" value="Tryptophan synthase beta chain"/>
    <property type="match status" value="1"/>
</dbReference>
<dbReference type="Gene3D" id="3.40.50.1100">
    <property type="match status" value="2"/>
</dbReference>
<dbReference type="HAMAP" id="MF_00133">
    <property type="entry name" value="Trp_synth_beta"/>
    <property type="match status" value="1"/>
</dbReference>
<dbReference type="InterPro" id="IPR006653">
    <property type="entry name" value="Trp_synth_b_CS"/>
</dbReference>
<dbReference type="InterPro" id="IPR006654">
    <property type="entry name" value="Trp_synth_beta"/>
</dbReference>
<dbReference type="InterPro" id="IPR023026">
    <property type="entry name" value="Trp_synth_beta/beta-like"/>
</dbReference>
<dbReference type="InterPro" id="IPR001926">
    <property type="entry name" value="TrpB-like_PALP"/>
</dbReference>
<dbReference type="InterPro" id="IPR036052">
    <property type="entry name" value="TrpB-like_PALP_sf"/>
</dbReference>
<dbReference type="NCBIfam" id="TIGR00263">
    <property type="entry name" value="trpB"/>
    <property type="match status" value="1"/>
</dbReference>
<dbReference type="PANTHER" id="PTHR48077:SF3">
    <property type="entry name" value="TRYPTOPHAN SYNTHASE"/>
    <property type="match status" value="1"/>
</dbReference>
<dbReference type="PANTHER" id="PTHR48077">
    <property type="entry name" value="TRYPTOPHAN SYNTHASE-RELATED"/>
    <property type="match status" value="1"/>
</dbReference>
<dbReference type="Pfam" id="PF00291">
    <property type="entry name" value="PALP"/>
    <property type="match status" value="1"/>
</dbReference>
<dbReference type="PIRSF" id="PIRSF001413">
    <property type="entry name" value="Trp_syn_beta"/>
    <property type="match status" value="1"/>
</dbReference>
<dbReference type="SUPFAM" id="SSF53686">
    <property type="entry name" value="Tryptophan synthase beta subunit-like PLP-dependent enzymes"/>
    <property type="match status" value="1"/>
</dbReference>
<dbReference type="PROSITE" id="PS00168">
    <property type="entry name" value="TRP_SYNTHASE_BETA"/>
    <property type="match status" value="1"/>
</dbReference>
<comment type="function">
    <text evidence="1">The beta subunit is responsible for the synthesis of L-tryptophan from indole and L-serine.</text>
</comment>
<comment type="catalytic activity">
    <reaction evidence="1">
        <text>(1S,2R)-1-C-(indol-3-yl)glycerol 3-phosphate + L-serine = D-glyceraldehyde 3-phosphate + L-tryptophan + H2O</text>
        <dbReference type="Rhea" id="RHEA:10532"/>
        <dbReference type="ChEBI" id="CHEBI:15377"/>
        <dbReference type="ChEBI" id="CHEBI:33384"/>
        <dbReference type="ChEBI" id="CHEBI:57912"/>
        <dbReference type="ChEBI" id="CHEBI:58866"/>
        <dbReference type="ChEBI" id="CHEBI:59776"/>
        <dbReference type="EC" id="4.2.1.20"/>
    </reaction>
</comment>
<comment type="cofactor">
    <cofactor evidence="1">
        <name>pyridoxal 5'-phosphate</name>
        <dbReference type="ChEBI" id="CHEBI:597326"/>
    </cofactor>
</comment>
<comment type="pathway">
    <text evidence="1">Amino-acid biosynthesis; L-tryptophan biosynthesis; L-tryptophan from chorismate: step 5/5.</text>
</comment>
<comment type="subunit">
    <text evidence="1">Tetramer of two alpha and two beta chains.</text>
</comment>
<comment type="similarity">
    <text evidence="1">Belongs to the TrpB family.</text>
</comment>